<name>Y1082_LISMF</name>
<comment type="similarity">
    <text evidence="1">Belongs to the UPF0637 family.</text>
</comment>
<sequence>MTFKGFSKKDFKTMQIPGLEARMNGIQTDIQPKFRAVGEELTTYLSAKLGDEMFLHIARHQRRSVNPPESTWLAICHDKRGYKKHPHFQVGLFDNYLFIWLAFIYENEESAKIANRFLKEKKLLADLPDNFAISPDHTEEKTYPVHDGQLKATLERFRDVKKGEFLVGKIYLPDDSHLSPGKDFIKEAEMVLDELIPLYKASLQ</sequence>
<reference key="1">
    <citation type="journal article" date="2004" name="Nucleic Acids Res.">
        <title>Whole genome comparisons of serotype 4b and 1/2a strains of the food-borne pathogen Listeria monocytogenes reveal new insights into the core genome components of this species.</title>
        <authorList>
            <person name="Nelson K.E."/>
            <person name="Fouts D.E."/>
            <person name="Mongodin E.F."/>
            <person name="Ravel J."/>
            <person name="DeBoy R.T."/>
            <person name="Kolonay J.F."/>
            <person name="Rasko D.A."/>
            <person name="Angiuoli S.V."/>
            <person name="Gill S.R."/>
            <person name="Paulsen I.T."/>
            <person name="Peterson J.D."/>
            <person name="White O."/>
            <person name="Nelson W.C."/>
            <person name="Nierman W.C."/>
            <person name="Beanan M.J."/>
            <person name="Brinkac L.M."/>
            <person name="Daugherty S.C."/>
            <person name="Dodson R.J."/>
            <person name="Durkin A.S."/>
            <person name="Madupu R."/>
            <person name="Haft D.H."/>
            <person name="Selengut J."/>
            <person name="Van Aken S.E."/>
            <person name="Khouri H.M."/>
            <person name="Fedorova N."/>
            <person name="Forberger H.A."/>
            <person name="Tran B."/>
            <person name="Kathariou S."/>
            <person name="Wonderling L.D."/>
            <person name="Uhlich G.A."/>
            <person name="Bayles D.O."/>
            <person name="Luchansky J.B."/>
            <person name="Fraser C.M."/>
        </authorList>
    </citation>
    <scope>NUCLEOTIDE SEQUENCE [LARGE SCALE GENOMIC DNA]</scope>
    <source>
        <strain>F2365</strain>
    </source>
</reference>
<dbReference type="EMBL" id="AE017262">
    <property type="protein sequence ID" value="AAT03859.1"/>
    <property type="molecule type" value="Genomic_DNA"/>
</dbReference>
<dbReference type="RefSeq" id="WP_003725570.1">
    <property type="nucleotide sequence ID" value="NC_002973.6"/>
</dbReference>
<dbReference type="SMR" id="Q721A5"/>
<dbReference type="KEGG" id="lmf:LMOf2365_1082"/>
<dbReference type="HOGENOM" id="CLU_096059_0_0_9"/>
<dbReference type="Gene3D" id="3.30.930.20">
    <property type="entry name" value="Protein of unknown function DUF1054"/>
    <property type="match status" value="1"/>
</dbReference>
<dbReference type="HAMAP" id="MF_01851">
    <property type="entry name" value="UPF0637"/>
    <property type="match status" value="1"/>
</dbReference>
<dbReference type="InterPro" id="IPR009403">
    <property type="entry name" value="UPF0637"/>
</dbReference>
<dbReference type="InterPro" id="IPR053707">
    <property type="entry name" value="UPF0637_domain_sf"/>
</dbReference>
<dbReference type="Pfam" id="PF06335">
    <property type="entry name" value="DUF1054"/>
    <property type="match status" value="1"/>
</dbReference>
<dbReference type="PIRSF" id="PIRSF021332">
    <property type="entry name" value="DUF1054"/>
    <property type="match status" value="1"/>
</dbReference>
<dbReference type="SUPFAM" id="SSF142913">
    <property type="entry name" value="YktB/PF0168-like"/>
    <property type="match status" value="1"/>
</dbReference>
<evidence type="ECO:0000255" key="1">
    <source>
        <dbReference type="HAMAP-Rule" id="MF_01851"/>
    </source>
</evidence>
<accession>Q721A5</accession>
<feature type="chain" id="PRO_0000348315" description="UPF0637 protein LMOf2365_1082">
    <location>
        <begin position="1"/>
        <end position="204"/>
    </location>
</feature>
<protein>
    <recommendedName>
        <fullName evidence="1">UPF0637 protein LMOf2365_1082</fullName>
    </recommendedName>
</protein>
<gene>
    <name type="ordered locus">LMOf2365_1082</name>
</gene>
<proteinExistence type="inferred from homology"/>
<organism>
    <name type="scientific">Listeria monocytogenes serotype 4b (strain F2365)</name>
    <dbReference type="NCBI Taxonomy" id="265669"/>
    <lineage>
        <taxon>Bacteria</taxon>
        <taxon>Bacillati</taxon>
        <taxon>Bacillota</taxon>
        <taxon>Bacilli</taxon>
        <taxon>Bacillales</taxon>
        <taxon>Listeriaceae</taxon>
        <taxon>Listeria</taxon>
    </lineage>
</organism>